<reference key="1">
    <citation type="journal article" date="2011" name="J. Bacteriol.">
        <title>Comparative genomics of 28 Salmonella enterica isolates: evidence for CRISPR-mediated adaptive sublineage evolution.</title>
        <authorList>
            <person name="Fricke W.F."/>
            <person name="Mammel M.K."/>
            <person name="McDermott P.F."/>
            <person name="Tartera C."/>
            <person name="White D.G."/>
            <person name="Leclerc J.E."/>
            <person name="Ravel J."/>
            <person name="Cebula T.A."/>
        </authorList>
    </citation>
    <scope>NUCLEOTIDE SEQUENCE [LARGE SCALE GENOMIC DNA]</scope>
    <source>
        <strain>SL476</strain>
    </source>
</reference>
<organism>
    <name type="scientific">Salmonella heidelberg (strain SL476)</name>
    <dbReference type="NCBI Taxonomy" id="454169"/>
    <lineage>
        <taxon>Bacteria</taxon>
        <taxon>Pseudomonadati</taxon>
        <taxon>Pseudomonadota</taxon>
        <taxon>Gammaproteobacteria</taxon>
        <taxon>Enterobacterales</taxon>
        <taxon>Enterobacteriaceae</taxon>
        <taxon>Salmonella</taxon>
    </lineage>
</organism>
<dbReference type="EC" id="7.-.-.-" evidence="1"/>
<dbReference type="EMBL" id="CP001120">
    <property type="protein sequence ID" value="ACF69131.1"/>
    <property type="molecule type" value="Genomic_DNA"/>
</dbReference>
<dbReference type="RefSeq" id="WP_000133179.1">
    <property type="nucleotide sequence ID" value="NC_011083.1"/>
</dbReference>
<dbReference type="SMR" id="B4THD6"/>
<dbReference type="GeneID" id="66755900"/>
<dbReference type="KEGG" id="seh:SeHA_C1629"/>
<dbReference type="HOGENOM" id="CLU_095255_1_0_6"/>
<dbReference type="Proteomes" id="UP000001866">
    <property type="component" value="Chromosome"/>
</dbReference>
<dbReference type="GO" id="GO:0005886">
    <property type="term" value="C:plasma membrane"/>
    <property type="evidence" value="ECO:0007669"/>
    <property type="project" value="UniProtKB-SubCell"/>
</dbReference>
<dbReference type="GO" id="GO:0022900">
    <property type="term" value="P:electron transport chain"/>
    <property type="evidence" value="ECO:0007669"/>
    <property type="project" value="UniProtKB-UniRule"/>
</dbReference>
<dbReference type="HAMAP" id="MF_00459">
    <property type="entry name" value="RsxA_RnfA"/>
    <property type="match status" value="1"/>
</dbReference>
<dbReference type="InterPro" id="IPR011293">
    <property type="entry name" value="Ion_transpt_RnfA/RsxA"/>
</dbReference>
<dbReference type="InterPro" id="IPR003667">
    <property type="entry name" value="NqrDE/RnfAE"/>
</dbReference>
<dbReference type="InterPro" id="IPR050133">
    <property type="entry name" value="NqrDE/RnfAE_oxidrdctase"/>
</dbReference>
<dbReference type="NCBIfam" id="NF003481">
    <property type="entry name" value="PRK05151.1"/>
    <property type="match status" value="1"/>
</dbReference>
<dbReference type="NCBIfam" id="TIGR01943">
    <property type="entry name" value="rnfA"/>
    <property type="match status" value="1"/>
</dbReference>
<dbReference type="PANTHER" id="PTHR30335">
    <property type="entry name" value="INTEGRAL MEMBRANE PROTEIN OF SOXR-REDUCING COMPLEX"/>
    <property type="match status" value="1"/>
</dbReference>
<dbReference type="PANTHER" id="PTHR30335:SF0">
    <property type="entry name" value="ION-TRANSLOCATING OXIDOREDUCTASE COMPLEX SUBUNIT A"/>
    <property type="match status" value="1"/>
</dbReference>
<dbReference type="Pfam" id="PF02508">
    <property type="entry name" value="Rnf-Nqr"/>
    <property type="match status" value="1"/>
</dbReference>
<dbReference type="PIRSF" id="PIRSF006102">
    <property type="entry name" value="NQR_DE"/>
    <property type="match status" value="1"/>
</dbReference>
<keyword id="KW-0997">Cell inner membrane</keyword>
<keyword id="KW-1003">Cell membrane</keyword>
<keyword id="KW-0249">Electron transport</keyword>
<keyword id="KW-0472">Membrane</keyword>
<keyword id="KW-1278">Translocase</keyword>
<keyword id="KW-0812">Transmembrane</keyword>
<keyword id="KW-1133">Transmembrane helix</keyword>
<keyword id="KW-0813">Transport</keyword>
<feature type="chain" id="PRO_1000191735" description="Ion-translocating oxidoreductase complex subunit A">
    <location>
        <begin position="1"/>
        <end position="193"/>
    </location>
</feature>
<feature type="transmembrane region" description="Helical" evidence="1">
    <location>
        <begin position="5"/>
        <end position="25"/>
    </location>
</feature>
<feature type="transmembrane region" description="Helical" evidence="1">
    <location>
        <begin position="47"/>
        <end position="67"/>
    </location>
</feature>
<feature type="transmembrane region" description="Helical" evidence="1">
    <location>
        <begin position="72"/>
        <end position="92"/>
    </location>
</feature>
<feature type="transmembrane region" description="Helical" evidence="1">
    <location>
        <begin position="102"/>
        <end position="122"/>
    </location>
</feature>
<feature type="transmembrane region" description="Helical" evidence="1">
    <location>
        <begin position="134"/>
        <end position="154"/>
    </location>
</feature>
<feature type="transmembrane region" description="Helical" evidence="1">
    <location>
        <begin position="171"/>
        <end position="191"/>
    </location>
</feature>
<comment type="function">
    <text evidence="1">Part of a membrane-bound complex that couples electron transfer with translocation of ions across the membrane. Required to maintain the reduced state of SoxR.</text>
</comment>
<comment type="subunit">
    <text evidence="1">The complex is composed of six subunits: RsxA, RsxB, RsxC, RsxD, RsxE and RsxG.</text>
</comment>
<comment type="subcellular location">
    <subcellularLocation>
        <location evidence="1">Cell inner membrane</location>
        <topology evidence="1">Multi-pass membrane protein</topology>
    </subcellularLocation>
</comment>
<comment type="similarity">
    <text evidence="1">Belongs to the NqrDE/RnfAE family.</text>
</comment>
<name>RSXA_SALHS</name>
<evidence type="ECO:0000255" key="1">
    <source>
        <dbReference type="HAMAP-Rule" id="MF_00459"/>
    </source>
</evidence>
<protein>
    <recommendedName>
        <fullName evidence="1">Ion-translocating oxidoreductase complex subunit A</fullName>
        <ecNumber evidence="1">7.-.-.-</ecNumber>
    </recommendedName>
    <alternativeName>
        <fullName evidence="1">Rsx electron transport complex subunit A</fullName>
    </alternativeName>
</protein>
<gene>
    <name evidence="1" type="primary">rsxA</name>
    <name type="synonym">rnfA</name>
    <name type="ordered locus">SeHA_C1629</name>
</gene>
<sequence length="193" mass="20893">MTDYLLLFVGTVLVNNFVLVKFLGLCPFMGVSKKLETAMGMGLATTFVMTLASICAWLIDTWILIPLDLIYLRTLAFILVIAVVVQFTEMVVRKTSPALYRLLGIFLPLITTNCAVLGVALLNINLGHHFLQSALYGFSAAVGFSLVMVLFAAIRERLAVADVPAPFRGNAIALITAGLMSLAFMGFSGLVKL</sequence>
<proteinExistence type="inferred from homology"/>
<accession>B4THD6</accession>